<comment type="function">
    <text evidence="1">High-affinity transporter for external inorganic phosphate.</text>
</comment>
<comment type="subcellular location">
    <subcellularLocation>
        <location evidence="1">Membrane</location>
        <topology evidence="1">Multi-pass membrane protein</topology>
    </subcellularLocation>
</comment>
<comment type="tissue specificity">
    <text evidence="4">Expressed at low levels in roots.</text>
</comment>
<comment type="miscellaneous">
    <text>Although related to the sugar transporter family, it does not transport sugars.</text>
</comment>
<comment type="similarity">
    <text evidence="5">Belongs to the major facilitator superfamily. Phosphate:H(+) symporter (TC 2.A.1.9) family.</text>
</comment>
<comment type="sequence caution" evidence="5">
    <conflict type="erroneous gene model prediction">
        <sequence resource="EMBL-CDS" id="BAF19437"/>
    </conflict>
</comment>
<name>PHT19_ORYSJ</name>
<dbReference type="EMBL" id="AF536969">
    <property type="protein sequence ID" value="AAN39050.1"/>
    <property type="molecule type" value="Genomic_DNA"/>
</dbReference>
<dbReference type="EMBL" id="AP008212">
    <property type="protein sequence ID" value="BAF19437.1"/>
    <property type="status" value="ALT_SEQ"/>
    <property type="molecule type" value="Genomic_DNA"/>
</dbReference>
<dbReference type="EMBL" id="AP014962">
    <property type="status" value="NOT_ANNOTATED_CDS"/>
    <property type="molecule type" value="Genomic_DNA"/>
</dbReference>
<dbReference type="EMBL" id="CM000143">
    <property type="protein sequence ID" value="EAZ36826.1"/>
    <property type="molecule type" value="Genomic_DNA"/>
</dbReference>
<dbReference type="SMR" id="Q8H6G7"/>
<dbReference type="FunCoup" id="Q8H6G7">
    <property type="interactions" value="459"/>
</dbReference>
<dbReference type="STRING" id="39947.Q8H6G7"/>
<dbReference type="PaxDb" id="39947-Q8H6G7"/>
<dbReference type="EnsemblPlants" id="Os06t0324800-01">
    <property type="protein sequence ID" value="Os06t0324800-01"/>
    <property type="gene ID" value="Os06g0324800"/>
</dbReference>
<dbReference type="GeneID" id="4340904"/>
<dbReference type="Gramene" id="Os06t0324800-01">
    <property type="protein sequence ID" value="Os06t0324800-01"/>
    <property type="gene ID" value="Os06g0324800"/>
</dbReference>
<dbReference type="KEGG" id="dosa:Os06g0324800"/>
<dbReference type="KEGG" id="osa:4340904"/>
<dbReference type="eggNOG" id="KOG0252">
    <property type="taxonomic scope" value="Eukaryota"/>
</dbReference>
<dbReference type="InParanoid" id="Q8H6G7"/>
<dbReference type="OrthoDB" id="433512at2759"/>
<dbReference type="Proteomes" id="UP000000763">
    <property type="component" value="Chromosome 6"/>
</dbReference>
<dbReference type="Proteomes" id="UP000007752">
    <property type="component" value="Chromosome 6"/>
</dbReference>
<dbReference type="Proteomes" id="UP000059680">
    <property type="component" value="Chromosome 6"/>
</dbReference>
<dbReference type="GO" id="GO:0016020">
    <property type="term" value="C:membrane"/>
    <property type="evidence" value="ECO:0007669"/>
    <property type="project" value="UniProtKB-SubCell"/>
</dbReference>
<dbReference type="GO" id="GO:0015293">
    <property type="term" value="F:symporter activity"/>
    <property type="evidence" value="ECO:0007669"/>
    <property type="project" value="UniProtKB-KW"/>
</dbReference>
<dbReference type="GO" id="GO:0006817">
    <property type="term" value="P:phosphate ion transport"/>
    <property type="evidence" value="ECO:0007669"/>
    <property type="project" value="UniProtKB-KW"/>
</dbReference>
<dbReference type="CDD" id="cd17364">
    <property type="entry name" value="MFS_PhT"/>
    <property type="match status" value="1"/>
</dbReference>
<dbReference type="Gene3D" id="1.20.1250.20">
    <property type="entry name" value="MFS general substrate transporter like domains"/>
    <property type="match status" value="2"/>
</dbReference>
<dbReference type="InterPro" id="IPR020846">
    <property type="entry name" value="MFS_dom"/>
</dbReference>
<dbReference type="InterPro" id="IPR005828">
    <property type="entry name" value="MFS_sugar_transport-like"/>
</dbReference>
<dbReference type="InterPro" id="IPR036259">
    <property type="entry name" value="MFS_trans_sf"/>
</dbReference>
<dbReference type="InterPro" id="IPR005829">
    <property type="entry name" value="Sugar_transporter_CS"/>
</dbReference>
<dbReference type="PANTHER" id="PTHR24064">
    <property type="entry name" value="SOLUTE CARRIER FAMILY 22 MEMBER"/>
    <property type="match status" value="1"/>
</dbReference>
<dbReference type="Pfam" id="PF00083">
    <property type="entry name" value="Sugar_tr"/>
    <property type="match status" value="1"/>
</dbReference>
<dbReference type="SUPFAM" id="SSF103473">
    <property type="entry name" value="MFS general substrate transporter"/>
    <property type="match status" value="1"/>
</dbReference>
<dbReference type="PROSITE" id="PS50850">
    <property type="entry name" value="MFS"/>
    <property type="match status" value="1"/>
</dbReference>
<dbReference type="PROSITE" id="PS00216">
    <property type="entry name" value="SUGAR_TRANSPORT_1"/>
    <property type="match status" value="1"/>
</dbReference>
<dbReference type="PROSITE" id="PS00217">
    <property type="entry name" value="SUGAR_TRANSPORT_2"/>
    <property type="match status" value="1"/>
</dbReference>
<feature type="chain" id="PRO_0000365489" description="Probable inorganic phosphate transporter 1-9">
    <location>
        <begin position="1"/>
        <end position="582"/>
    </location>
</feature>
<feature type="topological domain" description="Cytoplasmic" evidence="2">
    <location>
        <begin position="1"/>
        <end position="23"/>
    </location>
</feature>
<feature type="transmembrane region" description="Helical" evidence="2">
    <location>
        <begin position="24"/>
        <end position="44"/>
    </location>
</feature>
<feature type="topological domain" description="Extracellular" evidence="2">
    <location>
        <begin position="45"/>
        <end position="75"/>
    </location>
</feature>
<feature type="transmembrane region" description="Helical" evidence="2">
    <location>
        <begin position="76"/>
        <end position="96"/>
    </location>
</feature>
<feature type="topological domain" description="Cytoplasmic" evidence="2">
    <location>
        <begin position="97"/>
        <end position="103"/>
    </location>
</feature>
<feature type="transmembrane region" description="Helical" evidence="2">
    <location>
        <begin position="104"/>
        <end position="124"/>
    </location>
</feature>
<feature type="topological domain" description="Extracellular" evidence="2">
    <location>
        <begin position="125"/>
        <end position="130"/>
    </location>
</feature>
<feature type="transmembrane region" description="Helical" evidence="2">
    <location>
        <begin position="131"/>
        <end position="151"/>
    </location>
</feature>
<feature type="topological domain" description="Cytoplasmic" evidence="2">
    <location>
        <begin position="152"/>
        <end position="165"/>
    </location>
</feature>
<feature type="transmembrane region" description="Helical" evidence="2">
    <location>
        <begin position="166"/>
        <end position="186"/>
    </location>
</feature>
<feature type="topological domain" description="Extracellular" evidence="2">
    <location>
        <begin position="187"/>
        <end position="210"/>
    </location>
</feature>
<feature type="transmembrane region" description="Helical" evidence="2">
    <location>
        <begin position="211"/>
        <end position="231"/>
    </location>
</feature>
<feature type="topological domain" description="Cytoplasmic" evidence="2">
    <location>
        <begin position="232"/>
        <end position="307"/>
    </location>
</feature>
<feature type="transmembrane region" description="Helical" evidence="2">
    <location>
        <begin position="308"/>
        <end position="328"/>
    </location>
</feature>
<feature type="topological domain" description="Extracellular" evidence="2">
    <location>
        <begin position="329"/>
        <end position="354"/>
    </location>
</feature>
<feature type="transmembrane region" description="Helical" evidence="2">
    <location>
        <begin position="355"/>
        <end position="375"/>
    </location>
</feature>
<feature type="topological domain" description="Cytoplasmic" evidence="2">
    <location>
        <begin position="376"/>
        <end position="385"/>
    </location>
</feature>
<feature type="transmembrane region" description="Helical" evidence="2">
    <location>
        <begin position="386"/>
        <end position="406"/>
    </location>
</feature>
<feature type="topological domain" description="Extracellular" evidence="2">
    <location>
        <begin position="407"/>
        <end position="415"/>
    </location>
</feature>
<feature type="transmembrane region" description="Helical" evidence="2">
    <location>
        <begin position="416"/>
        <end position="436"/>
    </location>
</feature>
<feature type="topological domain" description="Cytoplasmic" evidence="2">
    <location>
        <begin position="437"/>
        <end position="451"/>
    </location>
</feature>
<feature type="transmembrane region" description="Helical" evidence="2">
    <location>
        <begin position="452"/>
        <end position="472"/>
    </location>
</feature>
<feature type="topological domain" description="Extracellular" evidence="2">
    <location>
        <begin position="473"/>
        <end position="485"/>
    </location>
</feature>
<feature type="transmembrane region" description="Helical" evidence="2">
    <location>
        <begin position="486"/>
        <end position="506"/>
    </location>
</feature>
<feature type="topological domain" description="Cytoplasmic" evidence="2">
    <location>
        <begin position="507"/>
        <end position="582"/>
    </location>
</feature>
<feature type="region of interest" description="Disordered" evidence="3">
    <location>
        <begin position="519"/>
        <end position="541"/>
    </location>
</feature>
<feature type="sequence conflict" description="In Ref. 1; AAN39050." evidence="5" ref="1">
    <original>R</original>
    <variation>G</variation>
    <location>
        <position position="163"/>
    </location>
</feature>
<keyword id="KW-0472">Membrane</keyword>
<keyword id="KW-0592">Phosphate transport</keyword>
<keyword id="KW-1185">Reference proteome</keyword>
<keyword id="KW-0769">Symport</keyword>
<keyword id="KW-0812">Transmembrane</keyword>
<keyword id="KW-1133">Transmembrane helix</keyword>
<keyword id="KW-0813">Transport</keyword>
<accession>Q8H6G7</accession>
<accession>A3BB87</accession>
<accession>Q0DCI6</accession>
<protein>
    <recommendedName>
        <fullName>Probable inorganic phosphate transporter 1-9</fullName>
        <shortName>OsPT9</shortName>
        <shortName>OsPht1;9</shortName>
    </recommendedName>
    <alternativeName>
        <fullName>H(+)/Pi cotransporter</fullName>
    </alternativeName>
</protein>
<proteinExistence type="evidence at transcript level"/>
<evidence type="ECO:0000250" key="1"/>
<evidence type="ECO:0000255" key="2"/>
<evidence type="ECO:0000256" key="3">
    <source>
        <dbReference type="SAM" id="MobiDB-lite"/>
    </source>
</evidence>
<evidence type="ECO:0000269" key="4">
    <source>
    </source>
</evidence>
<evidence type="ECO:0000305" key="5"/>
<sequence>MAPRIRVLAALDQARTQYYHFKAIVIAGMGLFTDSYDLFCISPVMKIFGRVYYAPSGSVDGSGSGPGVTPPAVVSATVGVALLGAVAGNVVFGALGDRVGRRRVYGACLLLMVCSSVGSGLSVCRTRRCALASLCFFRFLLGVGVGGDYPLSATIMSEFANRRTRGAFIAAVFSMQGFGILVSSAVTMAVAAAFDHYTGYPAPLDTPECADLAWRIILMAGAVPAALTYYWRMSMPETARYTALVERDVVKATNDIGRVLADLDLAAVAEEEVAAAALSPPPVTTPPPPRPSYGLFSRRFVRQHGRDLFACAAAWFLLDIPYYSSTLFQSQIYRPWFPPAAKVNAFQEAFNVAKFQAVIAVASTIPGYFAAMLLIERAGRRRLQMAGFLLMAVFLFALAGPYDGYWRDHAKTAGYIVLYSLTFFSANLGPNTTTFILPAELFPARFRSTCHGLSGAAGKLGALVGSIGFLWASQQKDGAAAGHLPGIGMMYALFVLGGICLLGLALTYAFTPETMTRSLEENESSVQAQSQVGDGGSDAGNGSDGLRFHELNVLMEAATKSPVSMASSHLSMSPILPHRMSL</sequence>
<gene>
    <name type="primary">PHT1-9</name>
    <name type="synonym">PT9</name>
    <name type="ordered locus">Os06g0324800</name>
    <name type="ordered locus">LOC_Os06g21920</name>
    <name type="ORF">OsJ_21168</name>
</gene>
<reference key="1">
    <citation type="journal article" date="2002" name="Proc. Natl. Acad. Sci. U.S.A.">
        <title>Rice phosphate transporters include an evolutionarily divergent gene specifically activated in arbuscular mycorrhizal symbiosis.</title>
        <authorList>
            <person name="Paszkowski U."/>
            <person name="Kroken S."/>
            <person name="Roux C."/>
            <person name="Briggs S.P."/>
        </authorList>
    </citation>
    <scope>NUCLEOTIDE SEQUENCE [GENOMIC DNA]</scope>
    <scope>TISSUE SPECIFICITY</scope>
</reference>
<reference key="2">
    <citation type="journal article" date="2005" name="Nature">
        <title>The map-based sequence of the rice genome.</title>
        <authorList>
            <consortium name="International rice genome sequencing project (IRGSP)"/>
        </authorList>
    </citation>
    <scope>NUCLEOTIDE SEQUENCE [LARGE SCALE GENOMIC DNA]</scope>
    <source>
        <strain>cv. Nipponbare</strain>
    </source>
</reference>
<reference key="3">
    <citation type="journal article" date="2008" name="Nucleic Acids Res.">
        <title>The rice annotation project database (RAP-DB): 2008 update.</title>
        <authorList>
            <consortium name="The rice annotation project (RAP)"/>
        </authorList>
    </citation>
    <scope>GENOME REANNOTATION</scope>
    <source>
        <strain>cv. Nipponbare</strain>
    </source>
</reference>
<reference key="4">
    <citation type="journal article" date="2013" name="Rice">
        <title>Improvement of the Oryza sativa Nipponbare reference genome using next generation sequence and optical map data.</title>
        <authorList>
            <person name="Kawahara Y."/>
            <person name="de la Bastide M."/>
            <person name="Hamilton J.P."/>
            <person name="Kanamori H."/>
            <person name="McCombie W.R."/>
            <person name="Ouyang S."/>
            <person name="Schwartz D.C."/>
            <person name="Tanaka T."/>
            <person name="Wu J."/>
            <person name="Zhou S."/>
            <person name="Childs K.L."/>
            <person name="Davidson R.M."/>
            <person name="Lin H."/>
            <person name="Quesada-Ocampo L."/>
            <person name="Vaillancourt B."/>
            <person name="Sakai H."/>
            <person name="Lee S.S."/>
            <person name="Kim J."/>
            <person name="Numa H."/>
            <person name="Itoh T."/>
            <person name="Buell C.R."/>
            <person name="Matsumoto T."/>
        </authorList>
    </citation>
    <scope>GENOME REANNOTATION</scope>
    <source>
        <strain>cv. Nipponbare</strain>
    </source>
</reference>
<reference key="5">
    <citation type="journal article" date="2005" name="PLoS Biol.">
        <title>The genomes of Oryza sativa: a history of duplications.</title>
        <authorList>
            <person name="Yu J."/>
            <person name="Wang J."/>
            <person name="Lin W."/>
            <person name="Li S."/>
            <person name="Li H."/>
            <person name="Zhou J."/>
            <person name="Ni P."/>
            <person name="Dong W."/>
            <person name="Hu S."/>
            <person name="Zeng C."/>
            <person name="Zhang J."/>
            <person name="Zhang Y."/>
            <person name="Li R."/>
            <person name="Xu Z."/>
            <person name="Li S."/>
            <person name="Li X."/>
            <person name="Zheng H."/>
            <person name="Cong L."/>
            <person name="Lin L."/>
            <person name="Yin J."/>
            <person name="Geng J."/>
            <person name="Li G."/>
            <person name="Shi J."/>
            <person name="Liu J."/>
            <person name="Lv H."/>
            <person name="Li J."/>
            <person name="Wang J."/>
            <person name="Deng Y."/>
            <person name="Ran L."/>
            <person name="Shi X."/>
            <person name="Wang X."/>
            <person name="Wu Q."/>
            <person name="Li C."/>
            <person name="Ren X."/>
            <person name="Wang J."/>
            <person name="Wang X."/>
            <person name="Li D."/>
            <person name="Liu D."/>
            <person name="Zhang X."/>
            <person name="Ji Z."/>
            <person name="Zhao W."/>
            <person name="Sun Y."/>
            <person name="Zhang Z."/>
            <person name="Bao J."/>
            <person name="Han Y."/>
            <person name="Dong L."/>
            <person name="Ji J."/>
            <person name="Chen P."/>
            <person name="Wu S."/>
            <person name="Liu J."/>
            <person name="Xiao Y."/>
            <person name="Bu D."/>
            <person name="Tan J."/>
            <person name="Yang L."/>
            <person name="Ye C."/>
            <person name="Zhang J."/>
            <person name="Xu J."/>
            <person name="Zhou Y."/>
            <person name="Yu Y."/>
            <person name="Zhang B."/>
            <person name="Zhuang S."/>
            <person name="Wei H."/>
            <person name="Liu B."/>
            <person name="Lei M."/>
            <person name="Yu H."/>
            <person name="Li Y."/>
            <person name="Xu H."/>
            <person name="Wei S."/>
            <person name="He X."/>
            <person name="Fang L."/>
            <person name="Zhang Z."/>
            <person name="Zhang Y."/>
            <person name="Huang X."/>
            <person name="Su Z."/>
            <person name="Tong W."/>
            <person name="Li J."/>
            <person name="Tong Z."/>
            <person name="Li S."/>
            <person name="Ye J."/>
            <person name="Wang L."/>
            <person name="Fang L."/>
            <person name="Lei T."/>
            <person name="Chen C.-S."/>
            <person name="Chen H.-C."/>
            <person name="Xu Z."/>
            <person name="Li H."/>
            <person name="Huang H."/>
            <person name="Zhang F."/>
            <person name="Xu H."/>
            <person name="Li N."/>
            <person name="Zhao C."/>
            <person name="Li S."/>
            <person name="Dong L."/>
            <person name="Huang Y."/>
            <person name="Li L."/>
            <person name="Xi Y."/>
            <person name="Qi Q."/>
            <person name="Li W."/>
            <person name="Zhang B."/>
            <person name="Hu W."/>
            <person name="Zhang Y."/>
            <person name="Tian X."/>
            <person name="Jiao Y."/>
            <person name="Liang X."/>
            <person name="Jin J."/>
            <person name="Gao L."/>
            <person name="Zheng W."/>
            <person name="Hao B."/>
            <person name="Liu S.-M."/>
            <person name="Wang W."/>
            <person name="Yuan L."/>
            <person name="Cao M."/>
            <person name="McDermott J."/>
            <person name="Samudrala R."/>
            <person name="Wang J."/>
            <person name="Wong G.K.-S."/>
            <person name="Yang H."/>
        </authorList>
    </citation>
    <scope>NUCLEOTIDE SEQUENCE [LARGE SCALE GENOMIC DNA]</scope>
    <source>
        <strain>cv. Nipponbare</strain>
    </source>
</reference>
<organism>
    <name type="scientific">Oryza sativa subsp. japonica</name>
    <name type="common">Rice</name>
    <dbReference type="NCBI Taxonomy" id="39947"/>
    <lineage>
        <taxon>Eukaryota</taxon>
        <taxon>Viridiplantae</taxon>
        <taxon>Streptophyta</taxon>
        <taxon>Embryophyta</taxon>
        <taxon>Tracheophyta</taxon>
        <taxon>Spermatophyta</taxon>
        <taxon>Magnoliopsida</taxon>
        <taxon>Liliopsida</taxon>
        <taxon>Poales</taxon>
        <taxon>Poaceae</taxon>
        <taxon>BOP clade</taxon>
        <taxon>Oryzoideae</taxon>
        <taxon>Oryzeae</taxon>
        <taxon>Oryzinae</taxon>
        <taxon>Oryza</taxon>
        <taxon>Oryza sativa</taxon>
    </lineage>
</organism>